<reference key="1">
    <citation type="submission" date="2004-08" db="EMBL/GenBank/DDBJ databases">
        <authorList>
            <person name="Bouget F.-Y."/>
            <person name="Schwartz C."/>
            <person name="Camasses A."/>
            <person name="Corellou F."/>
            <person name="de Oliveira Manes C.M."/>
            <person name="Moulanger M."/>
            <person name="Ferraz C."/>
            <person name="Demaille J."/>
            <person name="Moreau H."/>
            <person name="Derelle E."/>
            <person name="Delseny M."/>
            <person name="Cooke R."/>
            <person name="Rombault S."/>
        </authorList>
    </citation>
    <scope>NUCLEOTIDE SEQUENCE [GENOMIC DNA]</scope>
</reference>
<reference key="2">
    <citation type="journal article" date="2006" name="Proc. Natl. Acad. Sci. U.S.A.">
        <title>Genome analysis of the smallest free-living eukaryote Ostreococcus tauri unveils many unique features.</title>
        <authorList>
            <person name="Derelle E."/>
            <person name="Ferraz C."/>
            <person name="Rombauts S."/>
            <person name="Rouze P."/>
            <person name="Worden A.Z."/>
            <person name="Robbens S."/>
            <person name="Partensky F."/>
            <person name="Degroeve S."/>
            <person name="Echeynie S."/>
            <person name="Cooke R."/>
            <person name="Saeys Y."/>
            <person name="Wuyts J."/>
            <person name="Jabbari K."/>
            <person name="Bowler C."/>
            <person name="Panaud O."/>
            <person name="Piegu B."/>
            <person name="Ball S.G."/>
            <person name="Ral J.-P."/>
            <person name="Bouget F.-Y."/>
            <person name="Piganeau G."/>
            <person name="De Baets B."/>
            <person name="Picard A."/>
            <person name="Delseny M."/>
            <person name="Demaille J."/>
            <person name="Van de Peer Y."/>
            <person name="Moreau H."/>
        </authorList>
    </citation>
    <scope>NUCLEOTIDE SEQUENCE [LARGE SCALE GENOMIC DNA]</scope>
    <source>
        <strain>OTTH0595</strain>
    </source>
</reference>
<keyword id="KW-0150">Chloroplast</keyword>
<keyword id="KW-0157">Chromophore</keyword>
<keyword id="KW-0238">DNA-binding</keyword>
<keyword id="KW-0274">FAD</keyword>
<keyword id="KW-0285">Flavoprotein</keyword>
<keyword id="KW-0496">Mitochondrion</keyword>
<keyword id="KW-0934">Plastid</keyword>
<keyword id="KW-1185">Reference proteome</keyword>
<keyword id="KW-0809">Transit peptide</keyword>
<comment type="function">
    <text evidence="1">May have a photoreceptor function. Binds ss- and ds-DNA in a sequence non-specific manner, lacks photolyase activity (By similarity).</text>
</comment>
<comment type="cofactor">
    <cofactor evidence="1">
        <name>FAD</name>
        <dbReference type="ChEBI" id="CHEBI:57692"/>
    </cofactor>
    <text evidence="1">Binds 1 FAD per subunit.</text>
</comment>
<comment type="cofactor">
    <cofactor evidence="1">
        <name>(6R)-5,10-methylene-5,6,7,8-tetrahydrofolate</name>
        <dbReference type="ChEBI" id="CHEBI:15636"/>
    </cofactor>
    <text evidence="1">Binds 1 5,10-methenyltetrahydrofolate (MTHF) per subunit.</text>
</comment>
<comment type="subcellular location">
    <subcellularLocation>
        <location evidence="4">Plastid</location>
        <location evidence="4">Chloroplast</location>
    </subcellularLocation>
    <subcellularLocation>
        <location evidence="1">Mitochondrion</location>
    </subcellularLocation>
</comment>
<comment type="similarity">
    <text evidence="4">Belongs to the DNA photolyase class-1 family.</text>
</comment>
<dbReference type="EMBL" id="AY740084">
    <property type="protein sequence ID" value="AAU14279.1"/>
    <property type="molecule type" value="Genomic_DNA"/>
</dbReference>
<dbReference type="EMBL" id="CAID01000001">
    <property type="protein sequence ID" value="CEF96928.1"/>
    <property type="molecule type" value="Genomic_DNA"/>
</dbReference>
<dbReference type="RefSeq" id="XP_003074697.1">
    <property type="nucleotide sequence ID" value="XM_003074649.1"/>
</dbReference>
<dbReference type="SMR" id="Q5IFN2"/>
<dbReference type="FunCoup" id="Q5IFN2">
    <property type="interactions" value="23"/>
</dbReference>
<dbReference type="STRING" id="70448.Q5IFN2"/>
<dbReference type="KEGG" id="ota:OT_ostta01g06470"/>
<dbReference type="eggNOG" id="KOG0133">
    <property type="taxonomic scope" value="Eukaryota"/>
</dbReference>
<dbReference type="InParanoid" id="Q5IFN2"/>
<dbReference type="OrthoDB" id="435881at2759"/>
<dbReference type="Proteomes" id="UP000009170">
    <property type="component" value="Chromosome 1"/>
</dbReference>
<dbReference type="GO" id="GO:0009507">
    <property type="term" value="C:chloroplast"/>
    <property type="evidence" value="ECO:0007669"/>
    <property type="project" value="UniProtKB-SubCell"/>
</dbReference>
<dbReference type="GO" id="GO:0005739">
    <property type="term" value="C:mitochondrion"/>
    <property type="evidence" value="ECO:0007669"/>
    <property type="project" value="UniProtKB-SubCell"/>
</dbReference>
<dbReference type="GO" id="GO:0003904">
    <property type="term" value="F:deoxyribodipyrimidine photo-lyase activity"/>
    <property type="evidence" value="ECO:0007669"/>
    <property type="project" value="TreeGrafter"/>
</dbReference>
<dbReference type="GO" id="GO:0003677">
    <property type="term" value="F:DNA binding"/>
    <property type="evidence" value="ECO:0007669"/>
    <property type="project" value="UniProtKB-KW"/>
</dbReference>
<dbReference type="GO" id="GO:0071949">
    <property type="term" value="F:FAD binding"/>
    <property type="evidence" value="ECO:0007669"/>
    <property type="project" value="TreeGrafter"/>
</dbReference>
<dbReference type="GO" id="GO:0000719">
    <property type="term" value="P:photoreactive repair"/>
    <property type="evidence" value="ECO:0007669"/>
    <property type="project" value="TreeGrafter"/>
</dbReference>
<dbReference type="Gene3D" id="1.25.40.80">
    <property type="match status" value="1"/>
</dbReference>
<dbReference type="Gene3D" id="1.10.579.10">
    <property type="entry name" value="DNA Cyclobutane Dipyrimidine Photolyase, subunit A, domain 3"/>
    <property type="match status" value="1"/>
</dbReference>
<dbReference type="Gene3D" id="3.40.50.620">
    <property type="entry name" value="HUPs"/>
    <property type="match status" value="1"/>
</dbReference>
<dbReference type="InterPro" id="IPR014133">
    <property type="entry name" value="Cry_DASH"/>
</dbReference>
<dbReference type="InterPro" id="IPR036134">
    <property type="entry name" value="Crypto/Photolyase_FAD-like_sf"/>
</dbReference>
<dbReference type="InterPro" id="IPR036155">
    <property type="entry name" value="Crypto/Photolyase_N_sf"/>
</dbReference>
<dbReference type="InterPro" id="IPR005101">
    <property type="entry name" value="Cryptochr/Photolyase_FAD-bd"/>
</dbReference>
<dbReference type="InterPro" id="IPR002081">
    <property type="entry name" value="Cryptochrome/DNA_photolyase_1"/>
</dbReference>
<dbReference type="InterPro" id="IPR018394">
    <property type="entry name" value="DNA_photolyase_1_CS_C"/>
</dbReference>
<dbReference type="InterPro" id="IPR006050">
    <property type="entry name" value="DNA_photolyase_N"/>
</dbReference>
<dbReference type="InterPro" id="IPR014729">
    <property type="entry name" value="Rossmann-like_a/b/a_fold"/>
</dbReference>
<dbReference type="NCBIfam" id="TIGR02765">
    <property type="entry name" value="crypto_DASH"/>
    <property type="match status" value="1"/>
</dbReference>
<dbReference type="PANTHER" id="PTHR11455">
    <property type="entry name" value="CRYPTOCHROME"/>
    <property type="match status" value="1"/>
</dbReference>
<dbReference type="PANTHER" id="PTHR11455:SF22">
    <property type="entry name" value="CRYPTOCHROME DASH"/>
    <property type="match status" value="1"/>
</dbReference>
<dbReference type="Pfam" id="PF00875">
    <property type="entry name" value="DNA_photolyase"/>
    <property type="match status" value="1"/>
</dbReference>
<dbReference type="Pfam" id="PF03441">
    <property type="entry name" value="FAD_binding_7"/>
    <property type="match status" value="1"/>
</dbReference>
<dbReference type="PRINTS" id="PR00147">
    <property type="entry name" value="DNAPHOTLYASE"/>
</dbReference>
<dbReference type="SUPFAM" id="SSF48173">
    <property type="entry name" value="Cryptochrome/photolyase FAD-binding domain"/>
    <property type="match status" value="1"/>
</dbReference>
<dbReference type="SUPFAM" id="SSF52425">
    <property type="entry name" value="Cryptochrome/photolyase, N-terminal domain"/>
    <property type="match status" value="1"/>
</dbReference>
<dbReference type="PROSITE" id="PS00394">
    <property type="entry name" value="DNA_PHOTOLYASES_1_1"/>
    <property type="match status" value="1"/>
</dbReference>
<dbReference type="PROSITE" id="PS51645">
    <property type="entry name" value="PHR_CRY_ALPHA_BETA"/>
    <property type="match status" value="1"/>
</dbReference>
<sequence length="546" mass="60980">MGRTRVVIWFRNDLRLLDNACVARAATLASESSDVEVVPVYVFDETYFKPSKRGLARFGAGRGKFTLECVGDLKTSLRALGSDLLVRCGKSRDVIAELTLTGANDRTIILTQTEVTSEETEMDVAVERATRERARGGAASATMERHWGSTLYHIDDVPFDVTSGLSDLPDVFTPFRNKVESKCKVRDVIPAPTANELGHVPASVEGFEWMPKPSDLPFASSEIAMDCDKRIKDCLDERSVLDFKGGESNALARVKYYLWESDRLATYFETRNGMLGGDYSTKLAPWLALGCVSPRHVVSEIRRYESERVENKSTYWVIFELIWRDFFKFFALKHGNKIFHLDGTAGRRASWKRDEKILKAWKTGTTGYPLIDANMRELAATGFMSNRGRQNVASWLALDAGIDWRHGADWFEHHLLDYDTASNWGNWCAAAGMTGGRINRFNIAKQTKDYDPAGEYIKTWVKELAEVPAAYIADPNQAPRELRDRIGLNYPNKLALPRRDFTEMGSPPGPRRGGGGGGRGRGRPGGSTPNRGTKARVASVYDTVYG</sequence>
<accession>Q5IFN2</accession>
<accession>A0A090N2W1</accession>
<accession>Q01FE7</accession>
<organism>
    <name type="scientific">Ostreococcus tauri</name>
    <dbReference type="NCBI Taxonomy" id="70448"/>
    <lineage>
        <taxon>Eukaryota</taxon>
        <taxon>Viridiplantae</taxon>
        <taxon>Chlorophyta</taxon>
        <taxon>Mamiellophyceae</taxon>
        <taxon>Mamiellales</taxon>
        <taxon>Bathycoccaceae</taxon>
        <taxon>Ostreococcus</taxon>
    </lineage>
</organism>
<evidence type="ECO:0000250" key="1"/>
<evidence type="ECO:0000255" key="2"/>
<evidence type="ECO:0000256" key="3">
    <source>
        <dbReference type="SAM" id="MobiDB-lite"/>
    </source>
</evidence>
<evidence type="ECO:0000305" key="4"/>
<evidence type="ECO:0000312" key="5">
    <source>
        <dbReference type="EMBL" id="CEF96928.1"/>
    </source>
</evidence>
<proteinExistence type="inferred from homology"/>
<gene>
    <name evidence="5" type="ordered locus">Ot01g06470</name>
</gene>
<feature type="transit peptide" description="Chloroplast and mitochondrion" evidence="2">
    <location>
        <begin position="1"/>
        <end status="unknown"/>
    </location>
</feature>
<feature type="chain" id="PRO_0000235321" description="Cryptochrome DASH, chloroplastic/mitochondrial">
    <location>
        <begin status="unknown"/>
        <end position="546"/>
    </location>
</feature>
<feature type="domain" description="Photolyase/cryptochrome alpha/beta">
    <location>
        <begin position="4"/>
        <end position="151"/>
    </location>
</feature>
<feature type="region of interest" description="Disordered" evidence="3">
    <location>
        <begin position="497"/>
        <end position="546"/>
    </location>
</feature>
<feature type="compositionally biased region" description="Gly residues" evidence="3">
    <location>
        <begin position="511"/>
        <end position="525"/>
    </location>
</feature>
<protein>
    <recommendedName>
        <fullName>Cryptochrome DASH, chloroplastic/mitochondrial</fullName>
    </recommendedName>
</protein>
<name>CRYD_OSTTA</name>